<gene>
    <name evidence="1" type="primary">queA</name>
    <name type="ordered locus">BPP1147</name>
</gene>
<sequence>MPTPLTLADFDYHLPPELIAQSPAAERGGSRLLHLDAASRLHDRRFPDLAGLLRPHDLLVFNDTRVIKARLTGQKATGGKVEVLVERITAPDRALAHVRASKSPGPGMRLRLAEAFEAEVLGREGELFDLRFPAPVLDLLDAHGATPLPPYITHAADATDERRYQTVYAREPGAVAAPTAGLHFDQPMLEQLAAQGVQRAFVTLHVGAGTFQPVRVQNLAEHIMHAEWYTVPEATVAAIARARAHGGRIVAVGTTSVRALESAAAQAQDGPLAAAQGDTRLFITPGYRYRIVDALLTNFHLPQSTLLMLVSALAGVAPIRRAYAHAVAERYRFFSYGDAMFIETPAP</sequence>
<protein>
    <recommendedName>
        <fullName evidence="1">S-adenosylmethionine:tRNA ribosyltransferase-isomerase</fullName>
        <ecNumber evidence="1">2.4.99.17</ecNumber>
    </recommendedName>
    <alternativeName>
        <fullName evidence="1">Queuosine biosynthesis protein QueA</fullName>
    </alternativeName>
</protein>
<keyword id="KW-0963">Cytoplasm</keyword>
<keyword id="KW-0671">Queuosine biosynthesis</keyword>
<keyword id="KW-0949">S-adenosyl-L-methionine</keyword>
<keyword id="KW-0808">Transferase</keyword>
<accession>Q7WB60</accession>
<name>QUEA_BORPA</name>
<proteinExistence type="inferred from homology"/>
<feature type="chain" id="PRO_0000165383" description="S-adenosylmethionine:tRNA ribosyltransferase-isomerase">
    <location>
        <begin position="1"/>
        <end position="347"/>
    </location>
</feature>
<dbReference type="EC" id="2.4.99.17" evidence="1"/>
<dbReference type="EMBL" id="BX640426">
    <property type="protein sequence ID" value="CAE36448.1"/>
    <property type="status" value="ALT_INIT"/>
    <property type="molecule type" value="Genomic_DNA"/>
</dbReference>
<dbReference type="SMR" id="Q7WB60"/>
<dbReference type="KEGG" id="bpa:BPP1147"/>
<dbReference type="HOGENOM" id="CLU_039110_1_0_4"/>
<dbReference type="UniPathway" id="UPA00392"/>
<dbReference type="Proteomes" id="UP000001421">
    <property type="component" value="Chromosome"/>
</dbReference>
<dbReference type="GO" id="GO:0005737">
    <property type="term" value="C:cytoplasm"/>
    <property type="evidence" value="ECO:0007669"/>
    <property type="project" value="UniProtKB-SubCell"/>
</dbReference>
<dbReference type="GO" id="GO:0051075">
    <property type="term" value="F:S-adenosylmethionine:tRNA ribosyltransferase-isomerase activity"/>
    <property type="evidence" value="ECO:0007669"/>
    <property type="project" value="UniProtKB-EC"/>
</dbReference>
<dbReference type="GO" id="GO:0008616">
    <property type="term" value="P:queuosine biosynthetic process"/>
    <property type="evidence" value="ECO:0007669"/>
    <property type="project" value="UniProtKB-UniRule"/>
</dbReference>
<dbReference type="GO" id="GO:0002099">
    <property type="term" value="P:tRNA wobble guanine modification"/>
    <property type="evidence" value="ECO:0007669"/>
    <property type="project" value="TreeGrafter"/>
</dbReference>
<dbReference type="FunFam" id="3.40.1780.10:FF:000001">
    <property type="entry name" value="S-adenosylmethionine:tRNA ribosyltransferase-isomerase"/>
    <property type="match status" value="1"/>
</dbReference>
<dbReference type="Gene3D" id="2.40.10.240">
    <property type="entry name" value="QueA-like"/>
    <property type="match status" value="1"/>
</dbReference>
<dbReference type="Gene3D" id="3.40.1780.10">
    <property type="entry name" value="QueA-like"/>
    <property type="match status" value="1"/>
</dbReference>
<dbReference type="HAMAP" id="MF_00113">
    <property type="entry name" value="QueA"/>
    <property type="match status" value="1"/>
</dbReference>
<dbReference type="InterPro" id="IPR003699">
    <property type="entry name" value="QueA"/>
</dbReference>
<dbReference type="InterPro" id="IPR042118">
    <property type="entry name" value="QueA_dom1"/>
</dbReference>
<dbReference type="InterPro" id="IPR042119">
    <property type="entry name" value="QueA_dom2"/>
</dbReference>
<dbReference type="InterPro" id="IPR036100">
    <property type="entry name" value="QueA_sf"/>
</dbReference>
<dbReference type="NCBIfam" id="NF001140">
    <property type="entry name" value="PRK00147.1"/>
    <property type="match status" value="1"/>
</dbReference>
<dbReference type="NCBIfam" id="TIGR00113">
    <property type="entry name" value="queA"/>
    <property type="match status" value="1"/>
</dbReference>
<dbReference type="PANTHER" id="PTHR30307">
    <property type="entry name" value="S-ADENOSYLMETHIONINE:TRNA RIBOSYLTRANSFERASE-ISOMERASE"/>
    <property type="match status" value="1"/>
</dbReference>
<dbReference type="PANTHER" id="PTHR30307:SF0">
    <property type="entry name" value="S-ADENOSYLMETHIONINE:TRNA RIBOSYLTRANSFERASE-ISOMERASE"/>
    <property type="match status" value="1"/>
</dbReference>
<dbReference type="Pfam" id="PF02547">
    <property type="entry name" value="Queuosine_synth"/>
    <property type="match status" value="1"/>
</dbReference>
<dbReference type="SUPFAM" id="SSF111337">
    <property type="entry name" value="QueA-like"/>
    <property type="match status" value="1"/>
</dbReference>
<reference key="1">
    <citation type="journal article" date="2003" name="Nat. Genet.">
        <title>Comparative analysis of the genome sequences of Bordetella pertussis, Bordetella parapertussis and Bordetella bronchiseptica.</title>
        <authorList>
            <person name="Parkhill J."/>
            <person name="Sebaihia M."/>
            <person name="Preston A."/>
            <person name="Murphy L.D."/>
            <person name="Thomson N.R."/>
            <person name="Harris D.E."/>
            <person name="Holden M.T.G."/>
            <person name="Churcher C.M."/>
            <person name="Bentley S.D."/>
            <person name="Mungall K.L."/>
            <person name="Cerdeno-Tarraga A.-M."/>
            <person name="Temple L."/>
            <person name="James K.D."/>
            <person name="Harris B."/>
            <person name="Quail M.A."/>
            <person name="Achtman M."/>
            <person name="Atkin R."/>
            <person name="Baker S."/>
            <person name="Basham D."/>
            <person name="Bason N."/>
            <person name="Cherevach I."/>
            <person name="Chillingworth T."/>
            <person name="Collins M."/>
            <person name="Cronin A."/>
            <person name="Davis P."/>
            <person name="Doggett J."/>
            <person name="Feltwell T."/>
            <person name="Goble A."/>
            <person name="Hamlin N."/>
            <person name="Hauser H."/>
            <person name="Holroyd S."/>
            <person name="Jagels K."/>
            <person name="Leather S."/>
            <person name="Moule S."/>
            <person name="Norberczak H."/>
            <person name="O'Neil S."/>
            <person name="Ormond D."/>
            <person name="Price C."/>
            <person name="Rabbinowitsch E."/>
            <person name="Rutter S."/>
            <person name="Sanders M."/>
            <person name="Saunders D."/>
            <person name="Seeger K."/>
            <person name="Sharp S."/>
            <person name="Simmonds M."/>
            <person name="Skelton J."/>
            <person name="Squares R."/>
            <person name="Squares S."/>
            <person name="Stevens K."/>
            <person name="Unwin L."/>
            <person name="Whitehead S."/>
            <person name="Barrell B.G."/>
            <person name="Maskell D.J."/>
        </authorList>
    </citation>
    <scope>NUCLEOTIDE SEQUENCE [LARGE SCALE GENOMIC DNA]</scope>
    <source>
        <strain>12822 / ATCC BAA-587 / NCTC 13253</strain>
    </source>
</reference>
<organism>
    <name type="scientific">Bordetella parapertussis (strain 12822 / ATCC BAA-587 / NCTC 13253)</name>
    <dbReference type="NCBI Taxonomy" id="257311"/>
    <lineage>
        <taxon>Bacteria</taxon>
        <taxon>Pseudomonadati</taxon>
        <taxon>Pseudomonadota</taxon>
        <taxon>Betaproteobacteria</taxon>
        <taxon>Burkholderiales</taxon>
        <taxon>Alcaligenaceae</taxon>
        <taxon>Bordetella</taxon>
    </lineage>
</organism>
<evidence type="ECO:0000255" key="1">
    <source>
        <dbReference type="HAMAP-Rule" id="MF_00113"/>
    </source>
</evidence>
<evidence type="ECO:0000305" key="2"/>
<comment type="function">
    <text evidence="1">Transfers and isomerizes the ribose moiety from AdoMet to the 7-aminomethyl group of 7-deazaguanine (preQ1-tRNA) to give epoxyqueuosine (oQ-tRNA).</text>
</comment>
<comment type="catalytic activity">
    <reaction evidence="1">
        <text>7-aminomethyl-7-carbaguanosine(34) in tRNA + S-adenosyl-L-methionine = epoxyqueuosine(34) in tRNA + adenine + L-methionine + 2 H(+)</text>
        <dbReference type="Rhea" id="RHEA:32155"/>
        <dbReference type="Rhea" id="RHEA-COMP:10342"/>
        <dbReference type="Rhea" id="RHEA-COMP:18582"/>
        <dbReference type="ChEBI" id="CHEBI:15378"/>
        <dbReference type="ChEBI" id="CHEBI:16708"/>
        <dbReference type="ChEBI" id="CHEBI:57844"/>
        <dbReference type="ChEBI" id="CHEBI:59789"/>
        <dbReference type="ChEBI" id="CHEBI:82833"/>
        <dbReference type="ChEBI" id="CHEBI:194443"/>
        <dbReference type="EC" id="2.4.99.17"/>
    </reaction>
</comment>
<comment type="pathway">
    <text evidence="1">tRNA modification; tRNA-queuosine biosynthesis.</text>
</comment>
<comment type="subunit">
    <text evidence="1">Monomer.</text>
</comment>
<comment type="subcellular location">
    <subcellularLocation>
        <location evidence="1">Cytoplasm</location>
    </subcellularLocation>
</comment>
<comment type="similarity">
    <text evidence="1">Belongs to the QueA family.</text>
</comment>
<comment type="sequence caution" evidence="2">
    <conflict type="erroneous initiation">
        <sequence resource="EMBL-CDS" id="CAE36448"/>
    </conflict>
</comment>